<feature type="chain" id="PRO_1000045278" description="Probable transcriptional regulatory protein BRADO1143">
    <location>
        <begin position="1"/>
        <end position="248"/>
    </location>
</feature>
<accession>A4YMC4</accession>
<sequence length="248" mass="26777">MAGHSQFKNIMHRKGRQDAMKSKLFGKLAREITVAAKLGTPDPAMNPRLRAAVVAARAENMPKDNIERAIKKALGGEGENYAEIRYEGYGPGGVAVIVEALTDNRNRAASDIRSFFTKSGGNLGETGSVSFMFDRVGIIEFDRSVASDDSVLDAAIEAGADDVISGEGGHEVYASPDSFHEVAKNLEAKFGEPRKAALTWKPQNTVAVDDETGEKLVKLMDLLNEHDDVQNVYANFEISDALMAKMGG</sequence>
<proteinExistence type="inferred from homology"/>
<organism>
    <name type="scientific">Bradyrhizobium sp. (strain ORS 278)</name>
    <dbReference type="NCBI Taxonomy" id="114615"/>
    <lineage>
        <taxon>Bacteria</taxon>
        <taxon>Pseudomonadati</taxon>
        <taxon>Pseudomonadota</taxon>
        <taxon>Alphaproteobacteria</taxon>
        <taxon>Hyphomicrobiales</taxon>
        <taxon>Nitrobacteraceae</taxon>
        <taxon>Bradyrhizobium</taxon>
    </lineage>
</organism>
<reference key="1">
    <citation type="journal article" date="2007" name="Science">
        <title>Legumes symbioses: absence of nod genes in photosynthetic bradyrhizobia.</title>
        <authorList>
            <person name="Giraud E."/>
            <person name="Moulin L."/>
            <person name="Vallenet D."/>
            <person name="Barbe V."/>
            <person name="Cytryn E."/>
            <person name="Avarre J.-C."/>
            <person name="Jaubert M."/>
            <person name="Simon D."/>
            <person name="Cartieaux F."/>
            <person name="Prin Y."/>
            <person name="Bena G."/>
            <person name="Hannibal L."/>
            <person name="Fardoux J."/>
            <person name="Kojadinovic M."/>
            <person name="Vuillet L."/>
            <person name="Lajus A."/>
            <person name="Cruveiller S."/>
            <person name="Rouy Z."/>
            <person name="Mangenot S."/>
            <person name="Segurens B."/>
            <person name="Dossat C."/>
            <person name="Franck W.L."/>
            <person name="Chang W.-S."/>
            <person name="Saunders E."/>
            <person name="Bruce D."/>
            <person name="Richardson P."/>
            <person name="Normand P."/>
            <person name="Dreyfus B."/>
            <person name="Pignol D."/>
            <person name="Stacey G."/>
            <person name="Emerich D."/>
            <person name="Vermeglio A."/>
            <person name="Medigue C."/>
            <person name="Sadowsky M."/>
        </authorList>
    </citation>
    <scope>NUCLEOTIDE SEQUENCE [LARGE SCALE GENOMIC DNA]</scope>
    <source>
        <strain>ORS 278</strain>
    </source>
</reference>
<keyword id="KW-0963">Cytoplasm</keyword>
<keyword id="KW-0238">DNA-binding</keyword>
<keyword id="KW-1185">Reference proteome</keyword>
<keyword id="KW-0804">Transcription</keyword>
<keyword id="KW-0805">Transcription regulation</keyword>
<gene>
    <name type="ordered locus">BRADO1143</name>
</gene>
<protein>
    <recommendedName>
        <fullName evidence="1">Probable transcriptional regulatory protein BRADO1143</fullName>
    </recommendedName>
</protein>
<evidence type="ECO:0000255" key="1">
    <source>
        <dbReference type="HAMAP-Rule" id="MF_00693"/>
    </source>
</evidence>
<dbReference type="EMBL" id="CU234118">
    <property type="protein sequence ID" value="CAL75050.1"/>
    <property type="molecule type" value="Genomic_DNA"/>
</dbReference>
<dbReference type="RefSeq" id="WP_011924294.1">
    <property type="nucleotide sequence ID" value="NC_009445.1"/>
</dbReference>
<dbReference type="SMR" id="A4YMC4"/>
<dbReference type="STRING" id="114615.BRADO1143"/>
<dbReference type="KEGG" id="bra:BRADO1143"/>
<dbReference type="eggNOG" id="COG0217">
    <property type="taxonomic scope" value="Bacteria"/>
</dbReference>
<dbReference type="HOGENOM" id="CLU_062974_2_2_5"/>
<dbReference type="OrthoDB" id="9781053at2"/>
<dbReference type="Proteomes" id="UP000001994">
    <property type="component" value="Chromosome"/>
</dbReference>
<dbReference type="GO" id="GO:0005829">
    <property type="term" value="C:cytosol"/>
    <property type="evidence" value="ECO:0007669"/>
    <property type="project" value="TreeGrafter"/>
</dbReference>
<dbReference type="GO" id="GO:0003677">
    <property type="term" value="F:DNA binding"/>
    <property type="evidence" value="ECO:0007669"/>
    <property type="project" value="UniProtKB-UniRule"/>
</dbReference>
<dbReference type="GO" id="GO:0006355">
    <property type="term" value="P:regulation of DNA-templated transcription"/>
    <property type="evidence" value="ECO:0007669"/>
    <property type="project" value="UniProtKB-UniRule"/>
</dbReference>
<dbReference type="FunFam" id="1.10.10.200:FF:000002">
    <property type="entry name" value="Probable transcriptional regulatory protein CLM62_37755"/>
    <property type="match status" value="1"/>
</dbReference>
<dbReference type="Gene3D" id="1.10.10.200">
    <property type="match status" value="1"/>
</dbReference>
<dbReference type="Gene3D" id="3.30.70.980">
    <property type="match status" value="2"/>
</dbReference>
<dbReference type="HAMAP" id="MF_00693">
    <property type="entry name" value="Transcrip_reg_TACO1"/>
    <property type="match status" value="1"/>
</dbReference>
<dbReference type="InterPro" id="IPR017856">
    <property type="entry name" value="Integrase-like_N"/>
</dbReference>
<dbReference type="InterPro" id="IPR048300">
    <property type="entry name" value="TACO1_YebC-like_2nd/3rd_dom"/>
</dbReference>
<dbReference type="InterPro" id="IPR049083">
    <property type="entry name" value="TACO1_YebC_N"/>
</dbReference>
<dbReference type="InterPro" id="IPR002876">
    <property type="entry name" value="Transcrip_reg_TACO1-like"/>
</dbReference>
<dbReference type="InterPro" id="IPR026564">
    <property type="entry name" value="Transcrip_reg_TACO1-like_dom3"/>
</dbReference>
<dbReference type="InterPro" id="IPR029072">
    <property type="entry name" value="YebC-like"/>
</dbReference>
<dbReference type="NCBIfam" id="NF001030">
    <property type="entry name" value="PRK00110.1"/>
    <property type="match status" value="1"/>
</dbReference>
<dbReference type="NCBIfam" id="NF009044">
    <property type="entry name" value="PRK12378.1"/>
    <property type="match status" value="1"/>
</dbReference>
<dbReference type="NCBIfam" id="TIGR01033">
    <property type="entry name" value="YebC/PmpR family DNA-binding transcriptional regulator"/>
    <property type="match status" value="1"/>
</dbReference>
<dbReference type="PANTHER" id="PTHR12532:SF6">
    <property type="entry name" value="TRANSCRIPTIONAL REGULATORY PROTEIN YEBC-RELATED"/>
    <property type="match status" value="1"/>
</dbReference>
<dbReference type="PANTHER" id="PTHR12532">
    <property type="entry name" value="TRANSLATIONAL ACTIVATOR OF CYTOCHROME C OXIDASE 1"/>
    <property type="match status" value="1"/>
</dbReference>
<dbReference type="Pfam" id="PF20772">
    <property type="entry name" value="TACO1_YebC_N"/>
    <property type="match status" value="1"/>
</dbReference>
<dbReference type="Pfam" id="PF01709">
    <property type="entry name" value="Transcrip_reg"/>
    <property type="match status" value="1"/>
</dbReference>
<dbReference type="SUPFAM" id="SSF75625">
    <property type="entry name" value="YebC-like"/>
    <property type="match status" value="1"/>
</dbReference>
<name>Y1143_BRASO</name>
<comment type="subcellular location">
    <subcellularLocation>
        <location evidence="1">Cytoplasm</location>
    </subcellularLocation>
</comment>
<comment type="similarity">
    <text evidence="1">Belongs to the TACO1 family.</text>
</comment>